<keyword id="KW-0315">Glutamine amidotransferase</keyword>
<keyword id="KW-0378">Hydrolase</keyword>
<keyword id="KW-0456">Lyase</keyword>
<keyword id="KW-0663">Pyridoxal phosphate</keyword>
<evidence type="ECO:0000255" key="1">
    <source>
        <dbReference type="HAMAP-Rule" id="MF_01615"/>
    </source>
</evidence>
<name>PDXT_PYRAB</name>
<organism>
    <name type="scientific">Pyrococcus abyssi (strain GE5 / Orsay)</name>
    <dbReference type="NCBI Taxonomy" id="272844"/>
    <lineage>
        <taxon>Archaea</taxon>
        <taxon>Methanobacteriati</taxon>
        <taxon>Methanobacteriota</taxon>
        <taxon>Thermococci</taxon>
        <taxon>Thermococcales</taxon>
        <taxon>Thermococcaceae</taxon>
        <taxon>Pyrococcus</taxon>
    </lineage>
</organism>
<dbReference type="EC" id="4.3.3.6" evidence="1"/>
<dbReference type="EC" id="3.5.1.2" evidence="1"/>
<dbReference type="EMBL" id="AJ248285">
    <property type="protein sequence ID" value="CAB49707.1"/>
    <property type="molecule type" value="Genomic_DNA"/>
</dbReference>
<dbReference type="EMBL" id="HE613800">
    <property type="protein sequence ID" value="CCE70193.1"/>
    <property type="molecule type" value="Genomic_DNA"/>
</dbReference>
<dbReference type="PIR" id="B75124">
    <property type="entry name" value="B75124"/>
</dbReference>
<dbReference type="RefSeq" id="WP_010867915.1">
    <property type="nucleotide sequence ID" value="NC_000868.1"/>
</dbReference>
<dbReference type="SMR" id="Q9V0J6"/>
<dbReference type="STRING" id="272844.PAB0538"/>
<dbReference type="MEROPS" id="C26.A32"/>
<dbReference type="KEGG" id="pab:PAB0538"/>
<dbReference type="PATRIC" id="fig|272844.11.peg.836"/>
<dbReference type="eggNOG" id="arCOG00034">
    <property type="taxonomic scope" value="Archaea"/>
</dbReference>
<dbReference type="HOGENOM" id="CLU_069674_2_0_2"/>
<dbReference type="OrthoDB" id="26717at2157"/>
<dbReference type="PhylomeDB" id="Q9V0J6"/>
<dbReference type="UniPathway" id="UPA00245"/>
<dbReference type="Proteomes" id="UP000000810">
    <property type="component" value="Chromosome"/>
</dbReference>
<dbReference type="Proteomes" id="UP000009139">
    <property type="component" value="Chromosome"/>
</dbReference>
<dbReference type="GO" id="GO:0005829">
    <property type="term" value="C:cytosol"/>
    <property type="evidence" value="ECO:0007669"/>
    <property type="project" value="TreeGrafter"/>
</dbReference>
<dbReference type="GO" id="GO:1903600">
    <property type="term" value="C:glutaminase complex"/>
    <property type="evidence" value="ECO:0007669"/>
    <property type="project" value="TreeGrafter"/>
</dbReference>
<dbReference type="GO" id="GO:0004359">
    <property type="term" value="F:glutaminase activity"/>
    <property type="evidence" value="ECO:0007669"/>
    <property type="project" value="UniProtKB-UniRule"/>
</dbReference>
<dbReference type="GO" id="GO:0036381">
    <property type="term" value="F:pyridoxal 5'-phosphate synthase (glutamine hydrolysing) activity"/>
    <property type="evidence" value="ECO:0007669"/>
    <property type="project" value="UniProtKB-UniRule"/>
</dbReference>
<dbReference type="GO" id="GO:0006543">
    <property type="term" value="P:glutamine catabolic process"/>
    <property type="evidence" value="ECO:0007669"/>
    <property type="project" value="UniProtKB-UniRule"/>
</dbReference>
<dbReference type="GO" id="GO:0042823">
    <property type="term" value="P:pyridoxal phosphate biosynthetic process"/>
    <property type="evidence" value="ECO:0007669"/>
    <property type="project" value="UniProtKB-UniRule"/>
</dbReference>
<dbReference type="GO" id="GO:0008614">
    <property type="term" value="P:pyridoxine metabolic process"/>
    <property type="evidence" value="ECO:0007669"/>
    <property type="project" value="TreeGrafter"/>
</dbReference>
<dbReference type="CDD" id="cd01749">
    <property type="entry name" value="GATase1_PB"/>
    <property type="match status" value="1"/>
</dbReference>
<dbReference type="FunFam" id="3.40.50.880:FF:000041">
    <property type="entry name" value="Glutamine amidotransferase subunit pdxT, putative"/>
    <property type="match status" value="1"/>
</dbReference>
<dbReference type="Gene3D" id="3.40.50.880">
    <property type="match status" value="1"/>
</dbReference>
<dbReference type="HAMAP" id="MF_01615">
    <property type="entry name" value="PdxT"/>
    <property type="match status" value="1"/>
</dbReference>
<dbReference type="InterPro" id="IPR029062">
    <property type="entry name" value="Class_I_gatase-like"/>
</dbReference>
<dbReference type="InterPro" id="IPR002161">
    <property type="entry name" value="PdxT/SNO"/>
</dbReference>
<dbReference type="InterPro" id="IPR021196">
    <property type="entry name" value="PdxT/SNO_CS"/>
</dbReference>
<dbReference type="NCBIfam" id="TIGR03800">
    <property type="entry name" value="PLP_synth_Pdx2"/>
    <property type="match status" value="1"/>
</dbReference>
<dbReference type="PANTHER" id="PTHR31559">
    <property type="entry name" value="PYRIDOXAL 5'-PHOSPHATE SYNTHASE SUBUNIT SNO"/>
    <property type="match status" value="1"/>
</dbReference>
<dbReference type="PANTHER" id="PTHR31559:SF0">
    <property type="entry name" value="PYRIDOXAL 5'-PHOSPHATE SYNTHASE SUBUNIT SNO1-RELATED"/>
    <property type="match status" value="1"/>
</dbReference>
<dbReference type="Pfam" id="PF01174">
    <property type="entry name" value="SNO"/>
    <property type="match status" value="1"/>
</dbReference>
<dbReference type="PIRSF" id="PIRSF005639">
    <property type="entry name" value="Glut_amidoT_SNO"/>
    <property type="match status" value="1"/>
</dbReference>
<dbReference type="SUPFAM" id="SSF52317">
    <property type="entry name" value="Class I glutamine amidotransferase-like"/>
    <property type="match status" value="1"/>
</dbReference>
<dbReference type="PROSITE" id="PS01236">
    <property type="entry name" value="PDXT_SNO_1"/>
    <property type="match status" value="1"/>
</dbReference>
<dbReference type="PROSITE" id="PS51130">
    <property type="entry name" value="PDXT_SNO_2"/>
    <property type="match status" value="1"/>
</dbReference>
<feature type="chain" id="PRO_0000135686" description="Pyridoxal 5'-phosphate synthase subunit PdxT">
    <location>
        <begin position="1"/>
        <end position="196"/>
    </location>
</feature>
<feature type="active site" description="Nucleophile" evidence="1">
    <location>
        <position position="84"/>
    </location>
</feature>
<feature type="active site" description="Charge relay system" evidence="1">
    <location>
        <position position="178"/>
    </location>
</feature>
<feature type="active site" description="Charge relay system" evidence="1">
    <location>
        <position position="180"/>
    </location>
</feature>
<feature type="binding site" evidence="1">
    <location>
        <begin position="52"/>
        <end position="54"/>
    </location>
    <ligand>
        <name>L-glutamine</name>
        <dbReference type="ChEBI" id="CHEBI:58359"/>
    </ligand>
</feature>
<feature type="binding site" evidence="1">
    <location>
        <position position="113"/>
    </location>
    <ligand>
        <name>L-glutamine</name>
        <dbReference type="ChEBI" id="CHEBI:58359"/>
    </ligand>
</feature>
<feature type="binding site" evidence="1">
    <location>
        <begin position="141"/>
        <end position="142"/>
    </location>
    <ligand>
        <name>L-glutamine</name>
        <dbReference type="ChEBI" id="CHEBI:58359"/>
    </ligand>
</feature>
<protein>
    <recommendedName>
        <fullName evidence="1">Pyridoxal 5'-phosphate synthase subunit PdxT</fullName>
        <ecNumber evidence="1">4.3.3.6</ecNumber>
    </recommendedName>
    <alternativeName>
        <fullName evidence="1">Pdx2</fullName>
    </alternativeName>
    <alternativeName>
        <fullName evidence="1">Pyridoxal 5'-phosphate synthase glutaminase subunit</fullName>
        <ecNumber evidence="1">3.5.1.2</ecNumber>
    </alternativeName>
</protein>
<reference key="1">
    <citation type="journal article" date="2003" name="Mol. Microbiol.">
        <title>An integrated analysis of the genome of the hyperthermophilic archaeon Pyrococcus abyssi.</title>
        <authorList>
            <person name="Cohen G.N."/>
            <person name="Barbe V."/>
            <person name="Flament D."/>
            <person name="Galperin M."/>
            <person name="Heilig R."/>
            <person name="Lecompte O."/>
            <person name="Poch O."/>
            <person name="Prieur D."/>
            <person name="Querellou J."/>
            <person name="Ripp R."/>
            <person name="Thierry J.-C."/>
            <person name="Van der Oost J."/>
            <person name="Weissenbach J."/>
            <person name="Zivanovic Y."/>
            <person name="Forterre P."/>
        </authorList>
    </citation>
    <scope>NUCLEOTIDE SEQUENCE [LARGE SCALE GENOMIC DNA]</scope>
    <source>
        <strain>GE5 / Orsay</strain>
    </source>
</reference>
<reference key="2">
    <citation type="journal article" date="2012" name="Curr. Microbiol.">
        <title>Re-annotation of two hyperthermophilic archaea Pyrococcus abyssi GE5 and Pyrococcus furiosus DSM 3638.</title>
        <authorList>
            <person name="Gao J."/>
            <person name="Wang J."/>
        </authorList>
    </citation>
    <scope>GENOME REANNOTATION</scope>
    <source>
        <strain>GE5 / Orsay</strain>
    </source>
</reference>
<accession>Q9V0J6</accession>
<accession>G8ZGZ8</accession>
<gene>
    <name evidence="1" type="primary">pdxT</name>
    <name type="ordered locus">PYRAB07930</name>
    <name type="ORF">PAB0538</name>
</gene>
<proteinExistence type="inferred from homology"/>
<comment type="function">
    <text evidence="1">Catalyzes the hydrolysis of glutamine to glutamate and ammonia as part of the biosynthesis of pyridoxal 5'-phosphate. The resulting ammonia molecule is channeled to the active site of PdxS.</text>
</comment>
<comment type="catalytic activity">
    <reaction evidence="1">
        <text>aldehydo-D-ribose 5-phosphate + D-glyceraldehyde 3-phosphate + L-glutamine = pyridoxal 5'-phosphate + L-glutamate + phosphate + 3 H2O + H(+)</text>
        <dbReference type="Rhea" id="RHEA:31507"/>
        <dbReference type="ChEBI" id="CHEBI:15377"/>
        <dbReference type="ChEBI" id="CHEBI:15378"/>
        <dbReference type="ChEBI" id="CHEBI:29985"/>
        <dbReference type="ChEBI" id="CHEBI:43474"/>
        <dbReference type="ChEBI" id="CHEBI:58273"/>
        <dbReference type="ChEBI" id="CHEBI:58359"/>
        <dbReference type="ChEBI" id="CHEBI:59776"/>
        <dbReference type="ChEBI" id="CHEBI:597326"/>
        <dbReference type="EC" id="4.3.3.6"/>
    </reaction>
</comment>
<comment type="catalytic activity">
    <reaction evidence="1">
        <text>L-glutamine + H2O = L-glutamate + NH4(+)</text>
        <dbReference type="Rhea" id="RHEA:15889"/>
        <dbReference type="ChEBI" id="CHEBI:15377"/>
        <dbReference type="ChEBI" id="CHEBI:28938"/>
        <dbReference type="ChEBI" id="CHEBI:29985"/>
        <dbReference type="ChEBI" id="CHEBI:58359"/>
        <dbReference type="EC" id="3.5.1.2"/>
    </reaction>
</comment>
<comment type="pathway">
    <text evidence="1">Cofactor biosynthesis; pyridoxal 5'-phosphate biosynthesis.</text>
</comment>
<comment type="subunit">
    <text evidence="1">In the presence of PdxS, forms a dodecamer of heterodimers. Only shows activity in the heterodimer.</text>
</comment>
<comment type="similarity">
    <text evidence="1">Belongs to the glutaminase PdxT/SNO family.</text>
</comment>
<sequence>MKVGVIGLQGDVSEHIDATNLALKKLGVSGEAIWLKKPEQLKEVSAIIIPGGESTTISRLMQKTGLFEPVKKLIEDGLPVMGTCAGLIMLSREVLGATPEQRFLEVLDVRVNRNAYGRQVDSFEAPVRLSFDDEPFIGVFIRAPRIVELLSDRVKPLAWLEDRVVGVEQDNIIGLEFHPELTDDTRVHEYFLKKAL</sequence>